<gene>
    <name type="primary">KIAA0753</name>
    <name evidence="15" type="synonym">MNR</name>
    <name evidence="16" type="synonym">OFIP</name>
</gene>
<feature type="chain" id="PRO_0000280109" description="Protein moonraker">
    <location>
        <begin position="1"/>
        <end position="967"/>
    </location>
</feature>
<feature type="region of interest" description="Disordered" evidence="2">
    <location>
        <begin position="178"/>
        <end position="201"/>
    </location>
</feature>
<feature type="region of interest" description="Disordered" evidence="2">
    <location>
        <begin position="401"/>
        <end position="431"/>
    </location>
</feature>
<feature type="region of interest" description="Disordered" evidence="2">
    <location>
        <begin position="490"/>
        <end position="601"/>
    </location>
</feature>
<feature type="region of interest" description="Disordered" evidence="2">
    <location>
        <begin position="849"/>
        <end position="872"/>
    </location>
</feature>
<feature type="region of interest" description="Necessary and sufficient for CEP20-binding" evidence="8">
    <location>
        <begin position="885"/>
        <end position="967"/>
    </location>
</feature>
<feature type="coiled-coil region" evidence="1">
    <location>
        <begin position="616"/>
        <end position="642"/>
    </location>
</feature>
<feature type="compositionally biased region" description="Polar residues" evidence="2">
    <location>
        <begin position="179"/>
        <end position="188"/>
    </location>
</feature>
<feature type="compositionally biased region" description="Polar residues" evidence="2">
    <location>
        <begin position="525"/>
        <end position="543"/>
    </location>
</feature>
<feature type="compositionally biased region" description="Pro residues" evidence="2">
    <location>
        <begin position="557"/>
        <end position="568"/>
    </location>
</feature>
<feature type="modified residue" description="Phosphoserine" evidence="18">
    <location>
        <position position="287"/>
    </location>
</feature>
<feature type="modified residue" description="Phosphoserine" evidence="18">
    <location>
        <position position="409"/>
    </location>
</feature>
<feature type="modified residue" description="Phosphoserine" evidence="18">
    <location>
        <position position="700"/>
    </location>
</feature>
<feature type="modified residue" description="Phosphoserine" evidence="18">
    <location>
        <position position="826"/>
    </location>
</feature>
<feature type="splice variant" id="VSP_023539" description="In isoform 2." evidence="13 14">
    <location>
        <begin position="1"/>
        <end position="299"/>
    </location>
</feature>
<feature type="sequence variant" id="VAR_031065" description="In dbSNP:rs16955985.">
    <original>H</original>
    <variation>Q</variation>
    <location>
        <position position="201"/>
    </location>
</feature>
<feature type="sequence variant" id="VAR_079381" description="In JBTS38; uncertain significance; dbSNP:rs2150895254." evidence="9">
    <original>R</original>
    <variation>G</variation>
    <location>
        <position position="257"/>
    </location>
</feature>
<feature type="sequence variant" id="VAR_086266" description="In SRTD21." evidence="10 11">
    <location>
        <begin position="315"/>
        <end position="967"/>
    </location>
</feature>
<feature type="sequence variant" id="VAR_086267" description="In SRTD21." evidence="10 12">
    <location>
        <begin position="324"/>
        <end position="967"/>
    </location>
</feature>
<feature type="sequence variant" id="VAR_031066" description="In dbSNP:rs9889363.">
    <original>E</original>
    <variation>D</variation>
    <location>
        <position position="375"/>
    </location>
</feature>
<feature type="sequence variant" id="VAR_031067" description="In dbSNP:rs17794522.">
    <original>E</original>
    <variation>G</variation>
    <location>
        <position position="375"/>
    </location>
</feature>
<feature type="sequence variant" id="VAR_031068" description="In dbSNP:rs2289643." evidence="3 4 5">
    <original>D</original>
    <variation>N</variation>
    <location>
        <position position="444"/>
    </location>
</feature>
<feature type="sequence variant" id="VAR_031069" description="In dbSNP:rs2289642." evidence="3 4 5">
    <original>L</original>
    <variation>P</variation>
    <location>
        <position position="466"/>
    </location>
</feature>
<feature type="sequence variant" id="VAR_031070" description="In dbSNP:rs11868877.">
    <original>V</original>
    <variation>M</variation>
    <location>
        <position position="501"/>
    </location>
</feature>
<feature type="sequence variant" id="VAR_031071" description="In dbSNP:rs2304977.">
    <original>P</original>
    <variation>L</variation>
    <location>
        <position position="566"/>
    </location>
</feature>
<feature type="sequence variant" id="VAR_086268" description="In OFD15." evidence="8">
    <location>
        <begin position="631"/>
        <end position="967"/>
    </location>
</feature>
<feature type="sequence variant" id="VAR_031072" description="In dbSNP:rs1443417." evidence="3 4 5">
    <original>Q</original>
    <variation>R</variation>
    <location>
        <position position="896"/>
    </location>
</feature>
<feature type="sequence conflict" description="In Ref. 3; BAF85565." evidence="17" ref="3">
    <original>E</original>
    <variation>K</variation>
    <location>
        <position position="250"/>
    </location>
</feature>
<feature type="sequence conflict" description="In Ref. 1; BAA34473." evidence="17" ref="1">
    <original>S</original>
    <variation>G</variation>
    <location>
        <position position="821"/>
    </location>
</feature>
<name>MOONR_HUMAN</name>
<protein>
    <recommendedName>
        <fullName evidence="15">Protein moonraker</fullName>
        <shortName evidence="15">MNR</shortName>
    </recommendedName>
    <alternativeName>
        <fullName evidence="16">OFD1- and FOPNL-interacting protein</fullName>
    </alternativeName>
</protein>
<accession>Q2KHM9</accession>
<accession>A8KA11</accession>
<accession>B7Z479</accession>
<accession>O94853</accession>
<accession>Q05D97</accession>
<accession>Q2KHN0</accession>
<accession>Q9UG45</accession>
<proteinExistence type="evidence at protein level"/>
<reference key="1">
    <citation type="journal article" date="1998" name="DNA Res.">
        <title>Prediction of the coding sequences of unidentified human genes. XI. The complete sequences of 100 new cDNA clones from brain which code for large proteins in vitro.</title>
        <authorList>
            <person name="Nagase T."/>
            <person name="Ishikawa K."/>
            <person name="Suyama M."/>
            <person name="Kikuno R."/>
            <person name="Miyajima N."/>
            <person name="Tanaka A."/>
            <person name="Kotani H."/>
            <person name="Nomura N."/>
            <person name="Ohara O."/>
        </authorList>
    </citation>
    <scope>NUCLEOTIDE SEQUENCE [LARGE SCALE MRNA] (ISOFORM 1)</scope>
    <source>
        <tissue>Brain</tissue>
    </source>
</reference>
<reference key="2">
    <citation type="submission" date="2004-01" db="EMBL/GenBank/DDBJ databases">
        <authorList>
            <person name="Ohara O."/>
            <person name="Suyama M."/>
            <person name="Nagase T."/>
            <person name="Ishikawa K."/>
            <person name="Kikuno R."/>
        </authorList>
    </citation>
    <scope>SEQUENCE REVISION</scope>
</reference>
<reference key="3">
    <citation type="journal article" date="2004" name="Nat. Genet.">
        <title>Complete sequencing and characterization of 21,243 full-length human cDNAs.</title>
        <authorList>
            <person name="Ota T."/>
            <person name="Suzuki Y."/>
            <person name="Nishikawa T."/>
            <person name="Otsuki T."/>
            <person name="Sugiyama T."/>
            <person name="Irie R."/>
            <person name="Wakamatsu A."/>
            <person name="Hayashi K."/>
            <person name="Sato H."/>
            <person name="Nagai K."/>
            <person name="Kimura K."/>
            <person name="Makita H."/>
            <person name="Sekine M."/>
            <person name="Obayashi M."/>
            <person name="Nishi T."/>
            <person name="Shibahara T."/>
            <person name="Tanaka T."/>
            <person name="Ishii S."/>
            <person name="Yamamoto J."/>
            <person name="Saito K."/>
            <person name="Kawai Y."/>
            <person name="Isono Y."/>
            <person name="Nakamura Y."/>
            <person name="Nagahari K."/>
            <person name="Murakami K."/>
            <person name="Yasuda T."/>
            <person name="Iwayanagi T."/>
            <person name="Wagatsuma M."/>
            <person name="Shiratori A."/>
            <person name="Sudo H."/>
            <person name="Hosoiri T."/>
            <person name="Kaku Y."/>
            <person name="Kodaira H."/>
            <person name="Kondo H."/>
            <person name="Sugawara M."/>
            <person name="Takahashi M."/>
            <person name="Kanda K."/>
            <person name="Yokoi T."/>
            <person name="Furuya T."/>
            <person name="Kikkawa E."/>
            <person name="Omura Y."/>
            <person name="Abe K."/>
            <person name="Kamihara K."/>
            <person name="Katsuta N."/>
            <person name="Sato K."/>
            <person name="Tanikawa M."/>
            <person name="Yamazaki M."/>
            <person name="Ninomiya K."/>
            <person name="Ishibashi T."/>
            <person name="Yamashita H."/>
            <person name="Murakawa K."/>
            <person name="Fujimori K."/>
            <person name="Tanai H."/>
            <person name="Kimata M."/>
            <person name="Watanabe M."/>
            <person name="Hiraoka S."/>
            <person name="Chiba Y."/>
            <person name="Ishida S."/>
            <person name="Ono Y."/>
            <person name="Takiguchi S."/>
            <person name="Watanabe S."/>
            <person name="Yosida M."/>
            <person name="Hotuta T."/>
            <person name="Kusano J."/>
            <person name="Kanehori K."/>
            <person name="Takahashi-Fujii A."/>
            <person name="Hara H."/>
            <person name="Tanase T.-O."/>
            <person name="Nomura Y."/>
            <person name="Togiya S."/>
            <person name="Komai F."/>
            <person name="Hara R."/>
            <person name="Takeuchi K."/>
            <person name="Arita M."/>
            <person name="Imose N."/>
            <person name="Musashino K."/>
            <person name="Yuuki H."/>
            <person name="Oshima A."/>
            <person name="Sasaki N."/>
            <person name="Aotsuka S."/>
            <person name="Yoshikawa Y."/>
            <person name="Matsunawa H."/>
            <person name="Ichihara T."/>
            <person name="Shiohata N."/>
            <person name="Sano S."/>
            <person name="Moriya S."/>
            <person name="Momiyama H."/>
            <person name="Satoh N."/>
            <person name="Takami S."/>
            <person name="Terashima Y."/>
            <person name="Suzuki O."/>
            <person name="Nakagawa S."/>
            <person name="Senoh A."/>
            <person name="Mizoguchi H."/>
            <person name="Goto Y."/>
            <person name="Shimizu F."/>
            <person name="Wakebe H."/>
            <person name="Hishigaki H."/>
            <person name="Watanabe T."/>
            <person name="Sugiyama A."/>
            <person name="Takemoto M."/>
            <person name="Kawakami B."/>
            <person name="Yamazaki M."/>
            <person name="Watanabe K."/>
            <person name="Kumagai A."/>
            <person name="Itakura S."/>
            <person name="Fukuzumi Y."/>
            <person name="Fujimori Y."/>
            <person name="Komiyama M."/>
            <person name="Tashiro H."/>
            <person name="Tanigami A."/>
            <person name="Fujiwara T."/>
            <person name="Ono T."/>
            <person name="Yamada K."/>
            <person name="Fujii Y."/>
            <person name="Ozaki K."/>
            <person name="Hirao M."/>
            <person name="Ohmori Y."/>
            <person name="Kawabata A."/>
            <person name="Hikiji T."/>
            <person name="Kobatake N."/>
            <person name="Inagaki H."/>
            <person name="Ikema Y."/>
            <person name="Okamoto S."/>
            <person name="Okitani R."/>
            <person name="Kawakami T."/>
            <person name="Noguchi S."/>
            <person name="Itoh T."/>
            <person name="Shigeta K."/>
            <person name="Senba T."/>
            <person name="Matsumura K."/>
            <person name="Nakajima Y."/>
            <person name="Mizuno T."/>
            <person name="Morinaga M."/>
            <person name="Sasaki M."/>
            <person name="Togashi T."/>
            <person name="Oyama M."/>
            <person name="Hata H."/>
            <person name="Watanabe M."/>
            <person name="Komatsu T."/>
            <person name="Mizushima-Sugano J."/>
            <person name="Satoh T."/>
            <person name="Shirai Y."/>
            <person name="Takahashi Y."/>
            <person name="Nakagawa K."/>
            <person name="Okumura K."/>
            <person name="Nagase T."/>
            <person name="Nomura N."/>
            <person name="Kikuchi H."/>
            <person name="Masuho Y."/>
            <person name="Yamashita R."/>
            <person name="Nakai K."/>
            <person name="Yada T."/>
            <person name="Nakamura Y."/>
            <person name="Ohara O."/>
            <person name="Isogai T."/>
            <person name="Sugano S."/>
        </authorList>
    </citation>
    <scope>NUCLEOTIDE SEQUENCE [LARGE SCALE MRNA] (ISOFORMS 1 AND 2)</scope>
    <scope>VARIANTS ASN-444; PRO-466 AND ARG-896</scope>
    <source>
        <tissue>Tongue</tissue>
        <tissue>Trachea</tissue>
    </source>
</reference>
<reference key="4">
    <citation type="journal article" date="2006" name="Nature">
        <title>DNA sequence of human chromosome 17 and analysis of rearrangement in the human lineage.</title>
        <authorList>
            <person name="Zody M.C."/>
            <person name="Garber M."/>
            <person name="Adams D.J."/>
            <person name="Sharpe T."/>
            <person name="Harrow J."/>
            <person name="Lupski J.R."/>
            <person name="Nicholson C."/>
            <person name="Searle S.M."/>
            <person name="Wilming L."/>
            <person name="Young S.K."/>
            <person name="Abouelleil A."/>
            <person name="Allen N.R."/>
            <person name="Bi W."/>
            <person name="Bloom T."/>
            <person name="Borowsky M.L."/>
            <person name="Bugalter B.E."/>
            <person name="Butler J."/>
            <person name="Chang J.L."/>
            <person name="Chen C.-K."/>
            <person name="Cook A."/>
            <person name="Corum B."/>
            <person name="Cuomo C.A."/>
            <person name="de Jong P.J."/>
            <person name="DeCaprio D."/>
            <person name="Dewar K."/>
            <person name="FitzGerald M."/>
            <person name="Gilbert J."/>
            <person name="Gibson R."/>
            <person name="Gnerre S."/>
            <person name="Goldstein S."/>
            <person name="Grafham D.V."/>
            <person name="Grocock R."/>
            <person name="Hafez N."/>
            <person name="Hagopian D.S."/>
            <person name="Hart E."/>
            <person name="Norman C.H."/>
            <person name="Humphray S."/>
            <person name="Jaffe D.B."/>
            <person name="Jones M."/>
            <person name="Kamal M."/>
            <person name="Khodiyar V.K."/>
            <person name="LaButti K."/>
            <person name="Laird G."/>
            <person name="Lehoczky J."/>
            <person name="Liu X."/>
            <person name="Lokyitsang T."/>
            <person name="Loveland J."/>
            <person name="Lui A."/>
            <person name="Macdonald P."/>
            <person name="Major J.E."/>
            <person name="Matthews L."/>
            <person name="Mauceli E."/>
            <person name="McCarroll S.A."/>
            <person name="Mihalev A.H."/>
            <person name="Mudge J."/>
            <person name="Nguyen C."/>
            <person name="Nicol R."/>
            <person name="O'Leary S.B."/>
            <person name="Osoegawa K."/>
            <person name="Schwartz D.C."/>
            <person name="Shaw-Smith C."/>
            <person name="Stankiewicz P."/>
            <person name="Steward C."/>
            <person name="Swarbreck D."/>
            <person name="Venkataraman V."/>
            <person name="Whittaker C.A."/>
            <person name="Yang X."/>
            <person name="Zimmer A.R."/>
            <person name="Bradley A."/>
            <person name="Hubbard T."/>
            <person name="Birren B.W."/>
            <person name="Rogers J."/>
            <person name="Lander E.S."/>
            <person name="Nusbaum C."/>
        </authorList>
    </citation>
    <scope>NUCLEOTIDE SEQUENCE [LARGE SCALE GENOMIC DNA]</scope>
</reference>
<reference key="5">
    <citation type="journal article" date="2004" name="Genome Res.">
        <title>The status, quality, and expansion of the NIH full-length cDNA project: the Mammalian Gene Collection (MGC).</title>
        <authorList>
            <consortium name="The MGC Project Team"/>
        </authorList>
    </citation>
    <scope>NUCLEOTIDE SEQUENCE [LARGE SCALE MRNA] (ISOFORMS 1 AND 2)</scope>
    <scope>VARIANTS ASN-444; PRO-466 AND ARG-896</scope>
</reference>
<reference key="6">
    <citation type="journal article" date="2007" name="BMC Genomics">
        <title>The full-ORF clone resource of the German cDNA consortium.</title>
        <authorList>
            <person name="Bechtel S."/>
            <person name="Rosenfelder H."/>
            <person name="Duda A."/>
            <person name="Schmidt C.P."/>
            <person name="Ernst U."/>
            <person name="Wellenreuther R."/>
            <person name="Mehrle A."/>
            <person name="Schuster C."/>
            <person name="Bahr A."/>
            <person name="Bloecker H."/>
            <person name="Heubner D."/>
            <person name="Hoerlein A."/>
            <person name="Michel G."/>
            <person name="Wedler H."/>
            <person name="Koehrer K."/>
            <person name="Ottenwaelder B."/>
            <person name="Poustka A."/>
            <person name="Wiemann S."/>
            <person name="Schupp I."/>
        </authorList>
    </citation>
    <scope>NUCLEOTIDE SEQUENCE [LARGE SCALE MRNA] OF 404-967</scope>
    <scope>VARIANTS ASN-444; PRO-466 AND ARG-896</scope>
    <source>
        <tissue>Uterus</tissue>
    </source>
</reference>
<reference key="7">
    <citation type="journal article" date="2013" name="J. Proteome Res.">
        <title>Toward a comprehensive characterization of a human cancer cell phosphoproteome.</title>
        <authorList>
            <person name="Zhou H."/>
            <person name="Di Palma S."/>
            <person name="Preisinger C."/>
            <person name="Peng M."/>
            <person name="Polat A.N."/>
            <person name="Heck A.J."/>
            <person name="Mohammed S."/>
        </authorList>
    </citation>
    <scope>PHOSPHORYLATION [LARGE SCALE ANALYSIS] AT SER-287; SER-409; SER-700 AND SER-826</scope>
    <scope>IDENTIFICATION BY MASS SPECTROMETRY [LARGE SCALE ANALYSIS]</scope>
    <source>
        <tissue>Cervix carcinoma</tissue>
        <tissue>Erythroleukemia</tissue>
    </source>
</reference>
<reference key="8">
    <citation type="journal article" date="2014" name="Curr. Biol.">
        <title>Proximity interactions among centrosome components identify regulators of centriole duplication.</title>
        <authorList>
            <person name="Firat-Karalar E.N."/>
            <person name="Rauniyar N."/>
            <person name="Yates J.R. III"/>
            <person name="Stearns T."/>
        </authorList>
    </citation>
    <scope>FUNCTION</scope>
    <scope>INTERACTION WITH CEP63</scope>
    <scope>SUBCELLULAR LOCATION</scope>
</reference>
<reference key="9">
    <citation type="journal article" date="2015" name="Elife">
        <title>Centriolar satellites assemble centrosomal microcephaly proteins to recruit CDK2 and promote centriole duplication.</title>
        <authorList>
            <person name="Kodani A."/>
            <person name="Yu T.W."/>
            <person name="Johnson J.R."/>
            <person name="Jayaraman D."/>
            <person name="Johnson T.L."/>
            <person name="Al-Gazali L."/>
            <person name="Sztriha L."/>
            <person name="Partlow J.N."/>
            <person name="Kim H."/>
            <person name="Krup A.L."/>
            <person name="Dammermann A."/>
            <person name="Krogan N."/>
            <person name="Walsh C.A."/>
            <person name="Reiter J.F."/>
        </authorList>
    </citation>
    <scope>FUNCTION</scope>
    <scope>SUBCELLULAR LOCATION</scope>
    <scope>INTERACTION WITH WDR62 AND PCM1</scope>
</reference>
<reference key="10">
    <citation type="journal article" date="2016" name="Hum. Mol. Genet.">
        <title>OFIP/KIAA0753 forms a complex with OFD1 and FOR20 at pericentriolar satellites and centrosomes and is mutated in one individual with oral-facial-digital syndrome.</title>
        <authorList>
            <person name="Chevrier V."/>
            <person name="Bruel A.L."/>
            <person name="Van Dam T.J."/>
            <person name="Franco B."/>
            <person name="Lo Scalzo M."/>
            <person name="Lembo F."/>
            <person name="Audebert S."/>
            <person name="Baudelet E."/>
            <person name="Isnardon D."/>
            <person name="Bole A."/>
            <person name="Borg J.P."/>
            <person name="Kuentz P."/>
            <person name="Thevenon J."/>
            <person name="Burglen L."/>
            <person name="Faivre L."/>
            <person name="Riviere J.B."/>
            <person name="Huynen M.A."/>
            <person name="Birnbaum D."/>
            <person name="Rosnet O."/>
            <person name="Thauvin-Robinet C."/>
        </authorList>
    </citation>
    <scope>INVOLVEMENT IN OFD15</scope>
    <scope>INTERACTION WITH CEP20; OFD1 AND PCM1</scope>
    <scope>SUBCELLULAR LOCATION</scope>
    <scope>VARIANT OFD15 631-LYS--THR-967 DEL</scope>
</reference>
<reference key="11">
    <citation type="journal article" date="2017" name="Hum. Genet.">
        <title>Mutations in KIAA0753 cause Joubert syndrome associated with growth hormone deficiency.</title>
        <authorList>
            <consortium name="NISC Comparative Sequencing Program"/>
            <person name="Stephen J."/>
            <person name="Vilboux T."/>
            <person name="Mian L."/>
            <person name="Kuptanon C."/>
            <person name="Sinclair C.M."/>
            <person name="Yildirimli D."/>
            <person name="Maynard D.M."/>
            <person name="Bryant J."/>
            <person name="Fischer R."/>
            <person name="Vemulapalli M."/>
            <person name="Mullikin J.C."/>
            <person name="Huizing M."/>
            <person name="Gahl W.A."/>
            <person name="Malicdan M.C.V."/>
            <person name="Gunay-Aygun M."/>
        </authorList>
    </citation>
    <scope>INVOLVEMENT IN JBTS38</scope>
    <scope>VARIANT JBTS38 GLY-257</scope>
    <scope>FUNCTION</scope>
</reference>
<reference key="12">
    <citation type="journal article" date="2017" name="Sci. Rep.">
        <title>Novel KIAA0753 mutations extend the phenotype of skeletal ciliopathies.</title>
        <authorList>
            <person name="Hammarsjoe A."/>
            <person name="Wang Z."/>
            <person name="Vaz R."/>
            <person name="Taylan F."/>
            <person name="Sedghi M."/>
            <person name="Girisha K.M."/>
            <person name="Chitayat D."/>
            <person name="Neethukrishna K."/>
            <person name="Shannon P."/>
            <person name="Godoy R."/>
            <person name="Gowrishankar K."/>
            <person name="Lindstrand A."/>
            <person name="Nasiri J."/>
            <person name="Baktashian M."/>
            <person name="Newton P.T."/>
            <person name="Guo L."/>
            <person name="Hofmeister W."/>
            <person name="Pettersson M."/>
            <person name="Chagin A.S."/>
            <person name="Nishimura G."/>
            <person name="Yan L."/>
            <person name="Matsumoto N."/>
            <person name="Nordgren A."/>
            <person name="Miyake N."/>
            <person name="Grigelioniene G."/>
            <person name="Ikegawa S."/>
        </authorList>
    </citation>
    <scope>INVOLVEMENT IN SRTD21</scope>
    <scope>VARIANTS SRTD21 315-GLN--THR-967 DEL AND 324-ARG--THR-967 DEL</scope>
</reference>
<reference key="13">
    <citation type="journal article" date="2020" name="Eur. J. Med. Genet.">
        <title>A new case of KIAA0753-related variant of Jeune asphyxiating thoracic dystrophy.</title>
        <authorList>
            <person name="Faudi E."/>
            <person name="Brischoux-Boucher E."/>
            <person name="Huber C."/>
            <person name="Dabudyk T."/>
            <person name="Lenoir M."/>
            <person name="Baujat G."/>
            <person name="Michot C."/>
            <person name="Van Maldergem L."/>
            <person name="Cormier-Daire V."/>
            <person name="Piard J."/>
        </authorList>
    </citation>
    <scope>VARIANT SRTD21 315-GLN--THR-967 DEL</scope>
</reference>
<reference key="14">
    <citation type="journal article" date="2021" name="J. Hum. Genet.">
        <title>High diagnostic yield in skeletal ciliopathies using massively parallel genome sequencing, structural variant screening and RNA analyses.</title>
        <authorList>
            <person name="Hammarsjoe A."/>
            <person name="Pettersson M."/>
            <person name="Chitayat D."/>
            <person name="Handa A."/>
            <person name="Anderlid B.M."/>
            <person name="Bartocci M."/>
            <person name="Basel D."/>
            <person name="Batkovskyte D."/>
            <person name="Beleza-Meireles A."/>
            <person name="Conner P."/>
            <person name="Eisfeldt J."/>
            <person name="Girisha K.M."/>
            <person name="Chung B.H."/>
            <person name="Horemuzova E."/>
            <person name="Hyodo H."/>
            <person name="Kornejeva L."/>
            <person name="Lagerstedt-Robinson K."/>
            <person name="Lin A.E."/>
            <person name="Magnusson M."/>
            <person name="Moosa S."/>
            <person name="Nayak S.S."/>
            <person name="Nilsson D."/>
            <person name="Ohashi H."/>
            <person name="Ohashi-Fukuda N."/>
            <person name="Stranneheim H."/>
            <person name="Taylan F."/>
            <person name="Traberg R."/>
            <person name="Voss U."/>
            <person name="Wirta V."/>
            <person name="Nordgren A."/>
            <person name="Nishimura G."/>
            <person name="Lindstrand A."/>
            <person name="Grigelioniene G."/>
        </authorList>
    </citation>
    <scope>VARIANT SRTD21 324-ARG--THR-967 DEL</scope>
</reference>
<evidence type="ECO:0000255" key="1"/>
<evidence type="ECO:0000256" key="2">
    <source>
        <dbReference type="SAM" id="MobiDB-lite"/>
    </source>
</evidence>
<evidence type="ECO:0000269" key="3">
    <source>
    </source>
</evidence>
<evidence type="ECO:0000269" key="4">
    <source>
    </source>
</evidence>
<evidence type="ECO:0000269" key="5">
    <source>
    </source>
</evidence>
<evidence type="ECO:0000269" key="6">
    <source>
    </source>
</evidence>
<evidence type="ECO:0000269" key="7">
    <source>
    </source>
</evidence>
<evidence type="ECO:0000269" key="8">
    <source>
    </source>
</evidence>
<evidence type="ECO:0000269" key="9">
    <source>
    </source>
</evidence>
<evidence type="ECO:0000269" key="10">
    <source>
    </source>
</evidence>
<evidence type="ECO:0000269" key="11">
    <source>
    </source>
</evidence>
<evidence type="ECO:0000269" key="12">
    <source>
    </source>
</evidence>
<evidence type="ECO:0000303" key="13">
    <source>
    </source>
</evidence>
<evidence type="ECO:0000303" key="14">
    <source>
    </source>
</evidence>
<evidence type="ECO:0000303" key="15">
    <source>
    </source>
</evidence>
<evidence type="ECO:0000303" key="16">
    <source>
    </source>
</evidence>
<evidence type="ECO:0000305" key="17"/>
<evidence type="ECO:0007744" key="18">
    <source>
    </source>
</evidence>
<dbReference type="EMBL" id="AB018296">
    <property type="protein sequence ID" value="BAA34473.2"/>
    <property type="status" value="ALT_INIT"/>
    <property type="molecule type" value="mRNA"/>
</dbReference>
<dbReference type="EMBL" id="AK292876">
    <property type="protein sequence ID" value="BAF85565.1"/>
    <property type="molecule type" value="mRNA"/>
</dbReference>
<dbReference type="EMBL" id="AK296971">
    <property type="protein sequence ID" value="BAH12465.1"/>
    <property type="molecule type" value="mRNA"/>
</dbReference>
<dbReference type="EMBL" id="AC004706">
    <property type="status" value="NOT_ANNOTATED_CDS"/>
    <property type="molecule type" value="Genomic_DNA"/>
</dbReference>
<dbReference type="EMBL" id="AC015916">
    <property type="status" value="NOT_ANNOTATED_CDS"/>
    <property type="molecule type" value="Genomic_DNA"/>
</dbReference>
<dbReference type="EMBL" id="BC113016">
    <property type="protein sequence ID" value="AAI13017.1"/>
    <property type="molecule type" value="mRNA"/>
</dbReference>
<dbReference type="EMBL" id="BC113017">
    <property type="protein sequence ID" value="AAI13018.1"/>
    <property type="molecule type" value="mRNA"/>
</dbReference>
<dbReference type="EMBL" id="AL080108">
    <property type="protein sequence ID" value="CAB45712.1"/>
    <property type="molecule type" value="mRNA"/>
</dbReference>
<dbReference type="CCDS" id="CCDS42247.1">
    <molecule id="Q2KHM9-1"/>
</dbReference>
<dbReference type="CCDS" id="CCDS86564.1">
    <molecule id="Q2KHM9-2"/>
</dbReference>
<dbReference type="PIR" id="T12550">
    <property type="entry name" value="T12550"/>
</dbReference>
<dbReference type="RefSeq" id="NP_001338154.1">
    <molecule id="Q2KHM9-2"/>
    <property type="nucleotide sequence ID" value="NM_001351225.2"/>
</dbReference>
<dbReference type="RefSeq" id="NP_055619.2">
    <molecule id="Q2KHM9-1"/>
    <property type="nucleotide sequence ID" value="NM_014804.3"/>
</dbReference>
<dbReference type="RefSeq" id="XP_006721675.1">
    <property type="nucleotide sequence ID" value="XM_006721612.2"/>
</dbReference>
<dbReference type="RefSeq" id="XP_016880945.1">
    <property type="nucleotide sequence ID" value="XM_017025456.1"/>
</dbReference>
<dbReference type="SMR" id="Q2KHM9"/>
<dbReference type="BioGRID" id="115185">
    <property type="interactions" value="180"/>
</dbReference>
<dbReference type="CORUM" id="Q2KHM9"/>
<dbReference type="DIP" id="DIP-61716N"/>
<dbReference type="FunCoup" id="Q2KHM9">
    <property type="interactions" value="1447"/>
</dbReference>
<dbReference type="IntAct" id="Q2KHM9">
    <property type="interactions" value="135"/>
</dbReference>
<dbReference type="MINT" id="Q2KHM9"/>
<dbReference type="STRING" id="9606.ENSP00000355250"/>
<dbReference type="GlyGen" id="Q2KHM9">
    <property type="glycosylation" value="1 site, 1 O-linked glycan (1 site)"/>
</dbReference>
<dbReference type="iPTMnet" id="Q2KHM9"/>
<dbReference type="PhosphoSitePlus" id="Q2KHM9"/>
<dbReference type="BioMuta" id="KIAA0753"/>
<dbReference type="DMDM" id="296439322"/>
<dbReference type="OGP" id="O94853"/>
<dbReference type="jPOST" id="Q2KHM9"/>
<dbReference type="MassIVE" id="Q2KHM9"/>
<dbReference type="PaxDb" id="9606-ENSP00000355250"/>
<dbReference type="PeptideAtlas" id="Q2KHM9"/>
<dbReference type="ProteomicsDB" id="61302">
    <molecule id="Q2KHM9-1"/>
</dbReference>
<dbReference type="ProteomicsDB" id="61303">
    <molecule id="Q2KHM9-2"/>
</dbReference>
<dbReference type="Antibodypedia" id="5845">
    <property type="antibodies" value="16 antibodies from 8 providers"/>
</dbReference>
<dbReference type="DNASU" id="9851"/>
<dbReference type="Ensembl" id="ENST00000361413.8">
    <molecule id="Q2KHM9-1"/>
    <property type="protein sequence ID" value="ENSP00000355250.3"/>
    <property type="gene ID" value="ENSG00000198920.11"/>
</dbReference>
<dbReference type="Ensembl" id="ENST00000572370.5">
    <molecule id="Q2KHM9-2"/>
    <property type="protein sequence ID" value="ENSP00000460050.1"/>
    <property type="gene ID" value="ENSG00000198920.11"/>
</dbReference>
<dbReference type="GeneID" id="9851"/>
<dbReference type="KEGG" id="hsa:9851"/>
<dbReference type="MANE-Select" id="ENST00000361413.8">
    <property type="protein sequence ID" value="ENSP00000355250.3"/>
    <property type="RefSeq nucleotide sequence ID" value="NM_014804.3"/>
    <property type="RefSeq protein sequence ID" value="NP_055619.2"/>
</dbReference>
<dbReference type="UCSC" id="uc002gde.5">
    <molecule id="Q2KHM9-1"/>
    <property type="organism name" value="human"/>
</dbReference>
<dbReference type="AGR" id="HGNC:29110"/>
<dbReference type="CTD" id="9851"/>
<dbReference type="DisGeNET" id="9851"/>
<dbReference type="GeneCards" id="KIAA0753"/>
<dbReference type="HGNC" id="HGNC:29110">
    <property type="gene designation" value="KIAA0753"/>
</dbReference>
<dbReference type="HPA" id="ENSG00000198920">
    <property type="expression patterns" value="Low tissue specificity"/>
</dbReference>
<dbReference type="MalaCards" id="KIAA0753"/>
<dbReference type="MIM" id="617112">
    <property type="type" value="gene"/>
</dbReference>
<dbReference type="MIM" id="617127">
    <property type="type" value="phenotype"/>
</dbReference>
<dbReference type="MIM" id="619476">
    <property type="type" value="phenotype"/>
</dbReference>
<dbReference type="MIM" id="619479">
    <property type="type" value="phenotype"/>
</dbReference>
<dbReference type="neXtProt" id="NX_Q2KHM9"/>
<dbReference type="OpenTargets" id="ENSG00000198920"/>
<dbReference type="Orphanet" id="474">
    <property type="disease" value="Jeune syndrome"/>
</dbReference>
<dbReference type="Orphanet" id="475">
    <property type="disease" value="Joubert syndrome"/>
</dbReference>
<dbReference type="Orphanet" id="2754">
    <property type="disease" value="Orofaciodigital syndrome type 6"/>
</dbReference>
<dbReference type="PharmGKB" id="PA142671615"/>
<dbReference type="VEuPathDB" id="HostDB:ENSG00000198920"/>
<dbReference type="eggNOG" id="ENOG502QQYJ">
    <property type="taxonomic scope" value="Eukaryota"/>
</dbReference>
<dbReference type="GeneTree" id="ENSGT00390000009714"/>
<dbReference type="HOGENOM" id="CLU_012839_0_0_1"/>
<dbReference type="InParanoid" id="Q2KHM9"/>
<dbReference type="OMA" id="LERPWNG"/>
<dbReference type="OrthoDB" id="10072648at2759"/>
<dbReference type="PAN-GO" id="Q2KHM9">
    <property type="GO annotations" value="2 GO annotations based on evolutionary models"/>
</dbReference>
<dbReference type="PhylomeDB" id="Q2KHM9"/>
<dbReference type="TreeFam" id="TF331402"/>
<dbReference type="PathwayCommons" id="Q2KHM9"/>
<dbReference type="SignaLink" id="Q2KHM9"/>
<dbReference type="BioGRID-ORCS" id="9851">
    <property type="hits" value="9 hits in 1162 CRISPR screens"/>
</dbReference>
<dbReference type="CD-CODE" id="8C2F96ED">
    <property type="entry name" value="Centrosome"/>
</dbReference>
<dbReference type="ChiTaRS" id="KIAA0753">
    <property type="organism name" value="human"/>
</dbReference>
<dbReference type="GenomeRNAi" id="9851"/>
<dbReference type="Pharos" id="Q2KHM9">
    <property type="development level" value="Tdark"/>
</dbReference>
<dbReference type="PRO" id="PR:Q2KHM9"/>
<dbReference type="Proteomes" id="UP000005640">
    <property type="component" value="Chromosome 17"/>
</dbReference>
<dbReference type="RNAct" id="Q2KHM9">
    <property type="molecule type" value="protein"/>
</dbReference>
<dbReference type="Bgee" id="ENSG00000198920">
    <property type="expression patterns" value="Expressed in cortical plate and 179 other cell types or tissues"/>
</dbReference>
<dbReference type="ExpressionAtlas" id="Q2KHM9">
    <property type="expression patterns" value="baseline and differential"/>
</dbReference>
<dbReference type="GO" id="GO:0034451">
    <property type="term" value="C:centriolar satellite"/>
    <property type="evidence" value="ECO:0000314"/>
    <property type="project" value="UniProtKB"/>
</dbReference>
<dbReference type="GO" id="GO:0005814">
    <property type="term" value="C:centriole"/>
    <property type="evidence" value="ECO:0007669"/>
    <property type="project" value="UniProtKB-SubCell"/>
</dbReference>
<dbReference type="GO" id="GO:0005813">
    <property type="term" value="C:centrosome"/>
    <property type="evidence" value="ECO:0000314"/>
    <property type="project" value="HPA"/>
</dbReference>
<dbReference type="GO" id="GO:0036064">
    <property type="term" value="C:ciliary basal body"/>
    <property type="evidence" value="ECO:0000314"/>
    <property type="project" value="HPA"/>
</dbReference>
<dbReference type="GO" id="GO:0005929">
    <property type="term" value="C:cilium"/>
    <property type="evidence" value="ECO:0000314"/>
    <property type="project" value="HPA"/>
</dbReference>
<dbReference type="GO" id="GO:0005829">
    <property type="term" value="C:cytosol"/>
    <property type="evidence" value="ECO:0000314"/>
    <property type="project" value="HPA"/>
</dbReference>
<dbReference type="GO" id="GO:0005783">
    <property type="term" value="C:endoplasmic reticulum"/>
    <property type="evidence" value="ECO:0000314"/>
    <property type="project" value="HPA"/>
</dbReference>
<dbReference type="GO" id="GO:0005815">
    <property type="term" value="C:microtubule organizing center"/>
    <property type="evidence" value="ECO:0000318"/>
    <property type="project" value="GO_Central"/>
</dbReference>
<dbReference type="GO" id="GO:0051537">
    <property type="term" value="F:2 iron, 2 sulfur cluster binding"/>
    <property type="evidence" value="ECO:0007669"/>
    <property type="project" value="UniProtKB-KW"/>
</dbReference>
<dbReference type="GO" id="GO:0046872">
    <property type="term" value="F:metal ion binding"/>
    <property type="evidence" value="ECO:0007669"/>
    <property type="project" value="UniProtKB-KW"/>
</dbReference>
<dbReference type="GO" id="GO:0007099">
    <property type="term" value="P:centriole replication"/>
    <property type="evidence" value="ECO:0007669"/>
    <property type="project" value="InterPro"/>
</dbReference>
<dbReference type="GO" id="GO:0060271">
    <property type="term" value="P:cilium assembly"/>
    <property type="evidence" value="ECO:0000315"/>
    <property type="project" value="UniProtKB"/>
</dbReference>
<dbReference type="GO" id="GO:0061824">
    <property type="term" value="P:cytosolic ciliogenesis"/>
    <property type="evidence" value="ECO:0000315"/>
    <property type="project" value="UniProtKB"/>
</dbReference>
<dbReference type="GO" id="GO:0071539">
    <property type="term" value="P:protein localization to centrosome"/>
    <property type="evidence" value="ECO:0000315"/>
    <property type="project" value="UniProtKB"/>
</dbReference>
<dbReference type="InterPro" id="IPR031447">
    <property type="entry name" value="MNR"/>
</dbReference>
<dbReference type="PANTHER" id="PTHR15732">
    <property type="entry name" value="PROTEIN MOONRAKER"/>
    <property type="match status" value="1"/>
</dbReference>
<dbReference type="PANTHER" id="PTHR15732:SF4">
    <property type="entry name" value="PROTEIN MOONRAKER"/>
    <property type="match status" value="1"/>
</dbReference>
<dbReference type="Pfam" id="PF15718">
    <property type="entry name" value="MNR"/>
    <property type="match status" value="1"/>
</dbReference>
<comment type="function">
    <text evidence="6 7 9">Involved in centriole duplication (PubMed:24613305, PubMed:26297806). Positively regulates CEP63 centrosomal localization (PubMed:24613305, PubMed:26297806). Required for WDR62 centrosomal localization and promotes the centrosomal localization of CDK2 (PubMed:24613305, PubMed:26297806). May play a role in cilium assembly.</text>
</comment>
<comment type="subunit">
    <text evidence="6 7 8">Interacts with CEP63 (PubMed:24613305). Interacts with WDR62 (PubMed:26297806). Forms a complex with OFD1 and CEP20/FOR20 (PubMed:26643951). Interacts with PCM1 (PubMed:26297806, PubMed:26643951).</text>
</comment>
<comment type="interaction">
    <interactant intactId="EBI-2805604">
        <id>Q2KHM9</id>
    </interactant>
    <interactant intactId="EBI-5463075">
        <id>Q4LEZ3</id>
        <label>AARD</label>
    </interactant>
    <organismsDiffer>false</organismsDiffer>
    <experiments>3</experiments>
</comment>
<comment type="interaction">
    <interactant intactId="EBI-2805604">
        <id>Q2KHM9</id>
    </interactant>
    <interactant intactId="EBI-8643161">
        <id>Q9NX04</id>
        <label>AIRIM</label>
    </interactant>
    <organismsDiffer>false</organismsDiffer>
    <experiments>3</experiments>
</comment>
<comment type="interaction">
    <interactant intactId="EBI-2805604">
        <id>Q2KHM9</id>
    </interactant>
    <interactant intactId="EBI-17508719">
        <id>Q7RTU4</id>
        <label>BHLHA9</label>
    </interactant>
    <organismsDiffer>false</organismsDiffer>
    <experiments>3</experiments>
</comment>
<comment type="interaction">
    <interactant intactId="EBI-2805604">
        <id>Q2KHM9</id>
    </interactant>
    <interactant intactId="EBI-12065306">
        <id>P55201-2</id>
        <label>BRPF1</label>
    </interactant>
    <organismsDiffer>false</organismsDiffer>
    <experiments>3</experiments>
</comment>
<comment type="interaction">
    <interactant intactId="EBI-2805604">
        <id>Q2KHM9</id>
    </interactant>
    <interactant intactId="EBI-10175300">
        <id>Q8TD31-3</id>
        <label>CCHCR1</label>
    </interactant>
    <organismsDiffer>false</organismsDiffer>
    <experiments>3</experiments>
</comment>
<comment type="interaction">
    <interactant intactId="EBI-2805604">
        <id>Q2KHM9</id>
    </interactant>
    <interactant intactId="EBI-6873363">
        <id>Q8WUE5</id>
        <label>CT55</label>
    </interactant>
    <organismsDiffer>false</organismsDiffer>
    <experiments>3</experiments>
</comment>
<comment type="interaction">
    <interactant intactId="EBI-2805604">
        <id>Q2KHM9</id>
    </interactant>
    <interactant intactId="EBI-719941">
        <id>Q3B820</id>
        <label>FAM161A</label>
    </interactant>
    <organismsDiffer>false</organismsDiffer>
    <experiments>3</experiments>
</comment>
<comment type="interaction">
    <interactant intactId="EBI-2805604">
        <id>Q2KHM9</id>
    </interactant>
    <interactant intactId="EBI-746252">
        <id>Q96CN9</id>
        <label>GCC1</label>
    </interactant>
    <organismsDiffer>false</organismsDiffer>
    <experiments>3</experiments>
</comment>
<comment type="interaction">
    <interactant intactId="EBI-2805604">
        <id>Q2KHM9</id>
    </interactant>
    <interactant intactId="EBI-16429135">
        <id>A0A0S2Z4Q4</id>
        <label>HGS</label>
    </interactant>
    <organismsDiffer>false</organismsDiffer>
    <experiments>3</experiments>
</comment>
<comment type="interaction">
    <interactant intactId="EBI-2805604">
        <id>Q2KHM9</id>
    </interactant>
    <interactant intactId="EBI-740220">
        <id>O14964</id>
        <label>HGS</label>
    </interactant>
    <organismsDiffer>false</organismsDiffer>
    <experiments>3</experiments>
</comment>
<comment type="interaction">
    <interactant intactId="EBI-2805604">
        <id>Q2KHM9</id>
    </interactant>
    <interactant intactId="EBI-14069005">
        <id>Q9BVG8-5</id>
        <label>KIFC3</label>
    </interactant>
    <organismsDiffer>false</organismsDiffer>
    <experiments>3</experiments>
</comment>
<comment type="interaction">
    <interactant intactId="EBI-2805604">
        <id>Q2KHM9</id>
    </interactant>
    <interactant intactId="EBI-743811">
        <id>Q8NEH6</id>
        <label>MNS1</label>
    </interactant>
    <organismsDiffer>false</organismsDiffer>
    <experiments>3</experiments>
</comment>
<comment type="interaction">
    <interactant intactId="EBI-2805604">
        <id>Q2KHM9</id>
    </interactant>
    <interactant intactId="EBI-741421">
        <id>Q15154</id>
        <label>PCM1</label>
    </interactant>
    <organismsDiffer>false</organismsDiffer>
    <experiments>7</experiments>
</comment>
<comment type="interaction">
    <interactant intactId="EBI-2805604">
        <id>Q2KHM9</id>
    </interactant>
    <interactant intactId="EBI-16428950">
        <id>A0A0S2Z4G9</id>
        <label>RNF6</label>
    </interactant>
    <organismsDiffer>false</organismsDiffer>
    <experiments>3</experiments>
</comment>
<comment type="interaction">
    <interactant intactId="EBI-2805604">
        <id>Q2KHM9</id>
    </interactant>
    <interactant intactId="EBI-1378139">
        <id>Q9HAT0</id>
        <label>ROPN1</label>
    </interactant>
    <organismsDiffer>false</organismsDiffer>
    <experiments>3</experiments>
</comment>
<comment type="interaction">
    <interactant intactId="EBI-2805604">
        <id>Q2KHM9</id>
    </interactant>
    <interactant intactId="EBI-358489">
        <id>Q96GM5</id>
        <label>SMARCD1</label>
    </interactant>
    <organismsDiffer>false</organismsDiffer>
    <experiments>3</experiments>
</comment>
<comment type="interaction">
    <interactant intactId="EBI-2805604">
        <id>Q2KHM9</id>
    </interactant>
    <interactant intactId="EBI-3921347">
        <id>P51687</id>
        <label>SUOX</label>
    </interactant>
    <organismsDiffer>false</organismsDiffer>
    <experiments>3</experiments>
</comment>
<comment type="interaction">
    <interactant intactId="EBI-2805604">
        <id>Q2KHM9</id>
    </interactant>
    <interactant intactId="EBI-740781">
        <id>Q9BT92</id>
        <label>TCHP</label>
    </interactant>
    <organismsDiffer>false</organismsDiffer>
    <experiments>4</experiments>
</comment>
<comment type="interaction">
    <interactant intactId="EBI-2805604">
        <id>Q2KHM9</id>
    </interactant>
    <interactant intactId="EBI-10176734">
        <id>D3DUQ6</id>
        <label>TEAD4</label>
    </interactant>
    <organismsDiffer>false</organismsDiffer>
    <experiments>3</experiments>
</comment>
<comment type="interaction">
    <interactant intactId="EBI-2805604">
        <id>Q2KHM9</id>
    </interactant>
    <interactant intactId="EBI-739895">
        <id>Q8N6Y0</id>
        <label>USHBP1</label>
    </interactant>
    <organismsDiffer>false</organismsDiffer>
    <experiments>3</experiments>
</comment>
<comment type="interaction">
    <interactant intactId="EBI-2805604">
        <id>Q2KHM9</id>
    </interactant>
    <interactant intactId="EBI-714790">
        <id>O43379</id>
        <label>WDR62</label>
    </interactant>
    <organismsDiffer>false</organismsDiffer>
    <experiments>3</experiments>
</comment>
<comment type="interaction">
    <interactant intactId="EBI-2805604">
        <id>Q2KHM9</id>
    </interactant>
    <interactant intactId="EBI-10265237">
        <id>Q8NC26</id>
        <label>ZNF114</label>
    </interactant>
    <organismsDiffer>false</organismsDiffer>
    <experiments>3</experiments>
</comment>
<comment type="interaction">
    <interactant intactId="EBI-2805604">
        <id>Q2KHM9</id>
    </interactant>
    <interactant intactId="EBI-11975599">
        <id>Q9ULD5</id>
        <label>ZNF777</label>
    </interactant>
    <organismsDiffer>false</organismsDiffer>
    <experiments>3</experiments>
</comment>
<comment type="subcellular location">
    <subcellularLocation>
        <location evidence="8">Cytoplasm</location>
        <location evidence="8">Cytoskeleton</location>
        <location evidence="8">Microtubule organizing center</location>
        <location evidence="8">Centrosome</location>
        <location evidence="8">Centriole</location>
    </subcellularLocation>
    <subcellularLocation>
        <location evidence="6 7 8">Cytoplasm</location>
        <location evidence="6 7 8">Cytoskeleton</location>
        <location evidence="6 7 8">Microtubule organizing center</location>
        <location evidence="6 7 8">Centrosome</location>
        <location evidence="6 7 8">Centriolar satellite</location>
    </subcellularLocation>
    <subcellularLocation>
        <location evidence="8">Cytoplasm</location>
        <location evidence="8">Cytoskeleton</location>
        <location evidence="8">Microtubule organizing center</location>
        <location evidence="8">Centrosome</location>
    </subcellularLocation>
    <text evidence="8">Localization to centrioles and pericentriolar satellites may be mediated by interaction with PCM1.</text>
</comment>
<comment type="alternative products">
    <event type="alternative splicing"/>
    <isoform>
        <id>Q2KHM9-1</id>
        <name>1</name>
        <sequence type="displayed"/>
    </isoform>
    <isoform>
        <id>Q2KHM9-2</id>
        <name>2</name>
        <sequence type="described" ref="VSP_023539"/>
    </isoform>
</comment>
<comment type="disease" evidence="8">
    <disease id="DI-04826">
        <name>Orofaciodigital syndrome 15</name>
        <acronym>OFD15</acronym>
        <description>A form of orofaciodigital syndrome, a group of heterogeneous disorders characterized by malformations of the oral cavity, face and digits, and associated phenotypic abnormalities that lead to the delineation of various subtypes. OFD15 features include facial dysmorphism, lobulated tongue, clefting of the alveolar ridges, left hand postaxial polydactyly, broad right hallux and left hallux duplication, and intermittent respiratory difficulty. Brain anomalies include vermis hypoplasia with molar tooth sign, agenesis of corpus callosum, and ventricular dilation. OFD15 inheritance is autosomal recessive.</description>
        <dbReference type="MIM" id="617127"/>
    </disease>
    <text>The disease may be caused by variants affecting the gene represented in this entry.</text>
</comment>
<comment type="disease" evidence="9">
    <disease id="DI-06194">
        <name>Joubert syndrome 38</name>
        <acronym>JBTS38</acronym>
        <description>A form of Joubert syndrome, a disorder presenting with cerebellar ataxia, oculomotor apraxia, hypotonia, neonatal breathing abnormalities and psychomotor delay. Neuroradiologically, it is characterized by cerebellar vermian hypoplasia/aplasia, thickened and reoriented superior cerebellar peduncles, and an abnormally large interpeduncular fossa, giving the appearance of a molar tooth on transaxial slices (molar tooth sign). Additional variable features include retinal dystrophy, renal disease, liver fibrosis, and polydactyly. JBTS38 inheritance is autosomal recessive.</description>
        <dbReference type="MIM" id="619476"/>
    </disease>
    <text>The disease may be caused by variants affecting the gene represented in this entry.</text>
</comment>
<comment type="disease" evidence="10 11 12">
    <disease id="DI-06195">
        <name>Short-rib thoracic dysplasia 21 without polydactyly</name>
        <acronym>SRTD21</acronym>
        <description>A form of short-rib thoracic dysplasia, a group of autosomal recessive ciliopathies that are characterized by a constricted thoracic cage, short ribs, shortened tubular bones, and a 'trident' appearance of the acetabular roof. Polydactyly is variably present. Non-skeletal involvement can include cleft lip/palate as well as anomalies of major organs such as the brain, eye, heart, kidneys, liver, pancreas, intestines, and genitalia. Some forms of the disease are lethal in the neonatal period due to respiratory insufficiency secondary to a severely restricted thoracic cage, whereas others are compatible with life. Disease spectrum encompasses Ellis-van Creveld syndrome, asphyxiating thoracic dystrophy (Jeune syndrome), Mainzer-Saldino syndrome, and short rib-polydactyly syndrome.</description>
        <dbReference type="MIM" id="619479"/>
    </disease>
    <text>The disease is caused by variants affecting the gene represented in this entry.</text>
</comment>
<comment type="sequence caution" evidence="17">
    <conflict type="erroneous initiation">
        <sequence resource="EMBL-CDS" id="BAA34473"/>
    </conflict>
    <text>Extended N-terminus.</text>
</comment>
<keyword id="KW-0001">2Fe-2S</keyword>
<keyword id="KW-0025">Alternative splicing</keyword>
<keyword id="KW-1186">Ciliopathy</keyword>
<keyword id="KW-0175">Coiled coil</keyword>
<keyword id="KW-0963">Cytoplasm</keyword>
<keyword id="KW-0206">Cytoskeleton</keyword>
<keyword id="KW-0225">Disease variant</keyword>
<keyword id="KW-0408">Iron</keyword>
<keyword id="KW-0411">Iron-sulfur</keyword>
<keyword id="KW-0979">Joubert syndrome</keyword>
<keyword id="KW-0479">Metal-binding</keyword>
<keyword id="KW-0597">Phosphoprotein</keyword>
<keyword id="KW-1267">Proteomics identification</keyword>
<keyword id="KW-1185">Reference proteome</keyword>
<organism>
    <name type="scientific">Homo sapiens</name>
    <name type="common">Human</name>
    <dbReference type="NCBI Taxonomy" id="9606"/>
    <lineage>
        <taxon>Eukaryota</taxon>
        <taxon>Metazoa</taxon>
        <taxon>Chordata</taxon>
        <taxon>Craniata</taxon>
        <taxon>Vertebrata</taxon>
        <taxon>Euteleostomi</taxon>
        <taxon>Mammalia</taxon>
        <taxon>Eutheria</taxon>
        <taxon>Euarchontoglires</taxon>
        <taxon>Primates</taxon>
        <taxon>Haplorrhini</taxon>
        <taxon>Catarrhini</taxon>
        <taxon>Hominidae</taxon>
        <taxon>Homo</taxon>
    </lineage>
</organism>
<sequence>MGPGQPASTCVHLAPRTQLDGRSDPKVLQTQNQLQFNRNVPTHSSNLAIRYSCPHAIRIEKLKHSYNESYHCKDADCRVGPDLGSSVSFSVISQERLSYAVHLARRDVKRRQFEKHIKEHHLRSQPQSSQKCGHTKYKIPDHRVERKESKSQAACQCSHQPSKVEISSSGAKVYLYSSHPGQSDLTVPNSPPTHDPGLQPHPRIGDHKNISEQKSLLEVQRLQKELSSCIHKIEEVTKKDRLEEALDPDEERRIRIRRQEQAARSARMLYVLQQQVKEIQEELDKLSPHKIKHTKKSWAMSKLAAAHRGAIRALQMFVTQFTDRGEHPLPARCKELGSLIRQLSLCSVKLDADPSVPDVVIDILQQIEALESLLEKKLSPKKVKKCFSEIRSRFPIGSQKALERWPSTSPKGERRPLTAKDTFPQETSRPSVAKQLLADKYQPDTELPETQRLQSELDVLDADIVLEEGPFILDQSASFKDEVLAVAKTKAGKKKPVTENVPFRKKDTLAPARQQGLRKAERGRQSQPHSKSRVQQTTVSSRLKMNRQPVKDRKAPWIPPNPTSPPASPKCAAWLKVKTSPRDATKEPLQQEDPQEESHLTGAVEHEAARLAWLDAETSKRLKELEELKAKEIDSMQKQRLDWLDAETSRRTKELNELKAEEMYRLQQLSVSATHLADKVEEAVLDRLKPLLVKAQRVNSTTEANIHLKDGSSVNTAKAQPAQEVAAVDFESNNIRQLDDFLEDCASELWAVTHAKILGSETLATVEDSKDSPDLEIMMRRMEEMEKYQESVRQRYNKIAYADPRLWMQEENNDQKISAISEKPLSPHPIRITKTVDRKDPAVNIMLERPCNGNSLDESVGTEEGSEKREAPLLSLAEDSQQKEGRAPLFVPPGMQHSIGDYCSRFEQYLRIISHEAVGSFNPWLIAESFSEELVDEALGAVAAELQDMCEDYAEAVFTSEFLEAAT</sequence>